<evidence type="ECO:0000256" key="1">
    <source>
        <dbReference type="SAM" id="MobiDB-lite"/>
    </source>
</evidence>
<evidence type="ECO:0000269" key="2">
    <source>
    </source>
</evidence>
<comment type="function">
    <text evidence="2">Antitoxin component of a type II toxin-antitoxin (TA) system. Neutralizes the effect of cognate toxin RelE4, but no other RelE or ParE toxin.</text>
</comment>
<comment type="disruption phenotype">
    <text evidence="2">Cannot be disrupted, suggesting it is a functional antitoxin. No visible phenotype when the relBE4 operon is deleted.</text>
</comment>
<sequence>MAEPDPDIFDEDDEAILAADAEADADFEAGRTVPHERVGEWLKTLGTPHQTPPPYSWRK</sequence>
<keyword id="KW-1185">Reference proteome</keyword>
<keyword id="KW-1277">Toxin-antitoxin system</keyword>
<accession>P0CW75</accession>
<proteinExistence type="evidence at protein level"/>
<reference key="1">
    <citation type="journal article" date="2001" name="Proc. Natl. Acad. Sci. U.S.A.">
        <title>Complete genome sequence of Caulobacter crescentus.</title>
        <authorList>
            <person name="Nierman W.C."/>
            <person name="Feldblyum T.V."/>
            <person name="Laub M.T."/>
            <person name="Paulsen I.T."/>
            <person name="Nelson K.E."/>
            <person name="Eisen J.A."/>
            <person name="Heidelberg J.F."/>
            <person name="Alley M.R.K."/>
            <person name="Ohta N."/>
            <person name="Maddock J.R."/>
            <person name="Potocka I."/>
            <person name="Nelson W.C."/>
            <person name="Newton A."/>
            <person name="Stephens C."/>
            <person name="Phadke N.D."/>
            <person name="Ely B."/>
            <person name="DeBoy R.T."/>
            <person name="Dodson R.J."/>
            <person name="Durkin A.S."/>
            <person name="Gwinn M.L."/>
            <person name="Haft D.H."/>
            <person name="Kolonay J.F."/>
            <person name="Smit J."/>
            <person name="Craven M.B."/>
            <person name="Khouri H.M."/>
            <person name="Shetty J."/>
            <person name="Berry K.J."/>
            <person name="Utterback T.R."/>
            <person name="Tran K."/>
            <person name="Wolf A.M."/>
            <person name="Vamathevan J.J."/>
            <person name="Ermolaeva M.D."/>
            <person name="White O."/>
            <person name="Salzberg S.L."/>
            <person name="Venter J.C."/>
            <person name="Shapiro L."/>
            <person name="Fraser C.M."/>
        </authorList>
    </citation>
    <scope>NUCLEOTIDE SEQUENCE [LARGE SCALE GENOMIC DNA]</scope>
    <source>
        <strain>ATCC 19089 / CIP 103742 / CB 15</strain>
    </source>
</reference>
<reference key="2">
    <citation type="journal article" date="2005" name="Nucleic Acids Res.">
        <title>Toxin-antitoxin loci are highly abundant in free-living but lost from host-associated prokaryotes.</title>
        <authorList>
            <person name="Pandey D.P."/>
            <person name="Gerdes K."/>
        </authorList>
    </citation>
    <scope>IDENTIFICATION</scope>
    <scope>POSSIBLE FUNCTION</scope>
    <source>
        <strain>ATCC 19089 / CIP 103742 / CB 15</strain>
    </source>
</reference>
<reference key="3">
    <citation type="journal article" date="2010" name="Mol. Microbiol.">
        <title>Interaction specificity, toxicity and regulation of a paralogous set of ParE/RelE-family toxin-antitoxin systems.</title>
        <authorList>
            <person name="Fiebig A."/>
            <person name="Castro Rojas C.M."/>
            <person name="Siegal-Gaskins D."/>
            <person name="Crosson S."/>
        </authorList>
    </citation>
    <scope>FUNCTION AS AN ANTITOXIN</scope>
    <scope>DISRUPTION PHENOTYPE</scope>
    <source>
        <strain>ATCC 19089 / CIP 103742 / CB 15</strain>
    </source>
</reference>
<protein>
    <recommendedName>
        <fullName>Antitoxin RelB4</fullName>
    </recommendedName>
</protein>
<dbReference type="EMBL" id="AE005673">
    <property type="status" value="NOT_ANNOTATED_CDS"/>
    <property type="molecule type" value="Genomic_DNA"/>
</dbReference>
<dbReference type="RefSeq" id="WP_012640671.1">
    <property type="nucleotide sequence ID" value="NC_002696.2"/>
</dbReference>
<dbReference type="SMR" id="P0CW75"/>
<dbReference type="Proteomes" id="UP000001816">
    <property type="component" value="Chromosome"/>
</dbReference>
<name>RELB4_CAUVC</name>
<feature type="chain" id="PRO_0000408467" description="Antitoxin RelB4">
    <location>
        <begin position="1"/>
        <end position="59"/>
    </location>
</feature>
<feature type="region of interest" description="Disordered" evidence="1">
    <location>
        <begin position="38"/>
        <end position="59"/>
    </location>
</feature>
<feature type="compositionally biased region" description="Pro residues" evidence="1">
    <location>
        <begin position="50"/>
        <end position="59"/>
    </location>
</feature>
<organism>
    <name type="scientific">Caulobacter vibrioides (strain ATCC 19089 / CIP 103742 / CB 15)</name>
    <name type="common">Caulobacter crescentus</name>
    <dbReference type="NCBI Taxonomy" id="190650"/>
    <lineage>
        <taxon>Bacteria</taxon>
        <taxon>Pseudomonadati</taxon>
        <taxon>Pseudomonadota</taxon>
        <taxon>Alphaproteobacteria</taxon>
        <taxon>Caulobacterales</taxon>
        <taxon>Caulobacteraceae</taxon>
        <taxon>Caulobacter</taxon>
    </lineage>
</organism>
<gene>
    <name type="primary">relB4</name>
    <name type="ordered locus">CC_3130.1</name>
</gene>